<accession>P9WF83</accession>
<accession>L0T753</accession>
<accession>O07780</accession>
<accession>Q7D9K3</accession>
<proteinExistence type="evidence at protein level"/>
<evidence type="ECO:0000250" key="1"/>
<evidence type="ECO:0000255" key="2">
    <source>
        <dbReference type="HAMAP-Rule" id="MF_00265"/>
    </source>
</evidence>
<evidence type="ECO:0000269" key="3">
    <source>
    </source>
</evidence>
<evidence type="ECO:0000269" key="4">
    <source>
    </source>
</evidence>
<evidence type="ECO:0000305" key="5"/>
<name>VPC27_MYCTU</name>
<reference key="1">
    <citation type="journal article" date="1998" name="Nature">
        <title>Deciphering the biology of Mycobacterium tuberculosis from the complete genome sequence.</title>
        <authorList>
            <person name="Cole S.T."/>
            <person name="Brosch R."/>
            <person name="Parkhill J."/>
            <person name="Garnier T."/>
            <person name="Churcher C.M."/>
            <person name="Harris D.E."/>
            <person name="Gordon S.V."/>
            <person name="Eiglmeier K."/>
            <person name="Gas S."/>
            <person name="Barry C.E. III"/>
            <person name="Tekaia F."/>
            <person name="Badcock K."/>
            <person name="Basham D."/>
            <person name="Brown D."/>
            <person name="Chillingworth T."/>
            <person name="Connor R."/>
            <person name="Davies R.M."/>
            <person name="Devlin K."/>
            <person name="Feltwell T."/>
            <person name="Gentles S."/>
            <person name="Hamlin N."/>
            <person name="Holroyd S."/>
            <person name="Hornsby T."/>
            <person name="Jagels K."/>
            <person name="Krogh A."/>
            <person name="McLean J."/>
            <person name="Moule S."/>
            <person name="Murphy L.D."/>
            <person name="Oliver S."/>
            <person name="Osborne J."/>
            <person name="Quail M.A."/>
            <person name="Rajandream M.A."/>
            <person name="Rogers J."/>
            <person name="Rutter S."/>
            <person name="Seeger K."/>
            <person name="Skelton S."/>
            <person name="Squares S."/>
            <person name="Squares R."/>
            <person name="Sulston J.E."/>
            <person name="Taylor K."/>
            <person name="Whitehead S."/>
            <person name="Barrell B.G."/>
        </authorList>
    </citation>
    <scope>NUCLEOTIDE SEQUENCE [LARGE SCALE GENOMIC DNA]</scope>
    <source>
        <strain>ATCC 25618 / H37Rv</strain>
    </source>
</reference>
<reference key="2">
    <citation type="journal article" date="2009" name="PLoS Genet.">
        <title>Comprehensive functional analysis of Mycobacterium tuberculosis toxin-antitoxin systems: implications for pathogenesis, stress responses, and evolution.</title>
        <authorList>
            <person name="Ramage H.R."/>
            <person name="Connolly L.E."/>
            <person name="Cox J.S."/>
        </authorList>
    </citation>
    <scope>POSSIBLE FUNCTION</scope>
    <source>
        <strain>ATCC 35801 / TMC 107 / Erdman</strain>
    </source>
</reference>
<reference key="3">
    <citation type="journal article" date="2010" name="J. Biol. Chem.">
        <title>Noncognate Mycobacterium tuberculosis toxin-antitoxins can physically and functionally interact.</title>
        <authorList>
            <person name="Zhu L."/>
            <person name="Sharp J.D."/>
            <person name="Kobayashi H."/>
            <person name="Woychik N.A."/>
            <person name="Inouye M."/>
        </authorList>
    </citation>
    <scope>INTERACTION WITH ANTITOXIN VAPB27</scope>
    <source>
        <strain>ATCC 25618 / H37Rv</strain>
    </source>
</reference>
<reference key="4">
    <citation type="journal article" date="2011" name="Mol. Cell. Proteomics">
        <title>Proteogenomic analysis of Mycobacterium tuberculosis by high resolution mass spectrometry.</title>
        <authorList>
            <person name="Kelkar D.S."/>
            <person name="Kumar D."/>
            <person name="Kumar P."/>
            <person name="Balakrishnan L."/>
            <person name="Muthusamy B."/>
            <person name="Yadav A.K."/>
            <person name="Shrivastava P."/>
            <person name="Marimuthu A."/>
            <person name="Anand S."/>
            <person name="Sundaram H."/>
            <person name="Kingsbury R."/>
            <person name="Harsha H.C."/>
            <person name="Nair B."/>
            <person name="Prasad T.S."/>
            <person name="Chauhan D.S."/>
            <person name="Katoch K."/>
            <person name="Katoch V.M."/>
            <person name="Kumar P."/>
            <person name="Chaerkady R."/>
            <person name="Ramachandran S."/>
            <person name="Dash D."/>
            <person name="Pandey A."/>
        </authorList>
    </citation>
    <scope>IDENTIFICATION BY MASS SPECTROMETRY [LARGE SCALE ANALYSIS]</scope>
    <source>
        <strain>ATCC 25618 / H37Rv</strain>
    </source>
</reference>
<reference key="5">
    <citation type="journal article" date="2013" name="Mol. Cell. Proteomics">
        <title>Proteomic profiling of Mycobacterium tuberculosis identifies nutrient-starvation-responsive toxin-antitoxin systems.</title>
        <authorList>
            <person name="Albrethsen J."/>
            <person name="Agner J."/>
            <person name="Piersma S.R."/>
            <person name="Hoejrup P."/>
            <person name="Pham T.V."/>
            <person name="Weldingh K."/>
            <person name="Jimenez C.R."/>
            <person name="Andersen P."/>
            <person name="Rosenkrands I."/>
        </authorList>
    </citation>
    <scope>IDENTIFICATION BY MASS SPECTROMETRY</scope>
    <scope>SUBCELLULAR LOCATION</scope>
    <source>
        <strain>ATCC 27294 / TMC 102 / H37Rv</strain>
    </source>
</reference>
<keyword id="KW-0378">Hydrolase</keyword>
<keyword id="KW-0460">Magnesium</keyword>
<keyword id="KW-0479">Metal-binding</keyword>
<keyword id="KW-0540">Nuclease</keyword>
<keyword id="KW-1185">Reference proteome</keyword>
<keyword id="KW-0964">Secreted</keyword>
<keyword id="KW-1277">Toxin-antitoxin system</keyword>
<organism>
    <name type="scientific">Mycobacterium tuberculosis (strain ATCC 25618 / H37Rv)</name>
    <dbReference type="NCBI Taxonomy" id="83332"/>
    <lineage>
        <taxon>Bacteria</taxon>
        <taxon>Bacillati</taxon>
        <taxon>Actinomycetota</taxon>
        <taxon>Actinomycetes</taxon>
        <taxon>Mycobacteriales</taxon>
        <taxon>Mycobacteriaceae</taxon>
        <taxon>Mycobacterium</taxon>
        <taxon>Mycobacterium tuberculosis complex</taxon>
    </lineage>
</organism>
<protein>
    <recommendedName>
        <fullName evidence="2">Ribonuclease VapC27</fullName>
        <shortName evidence="2">RNase VapC27</shortName>
        <ecNumber evidence="2">3.1.-.-</ecNumber>
    </recommendedName>
    <alternativeName>
        <fullName evidence="2">Toxin VapC27</fullName>
    </alternativeName>
</protein>
<dbReference type="EC" id="3.1.-.-" evidence="2"/>
<dbReference type="EMBL" id="AL123456">
    <property type="protein sequence ID" value="CCP43337.1"/>
    <property type="molecule type" value="Genomic_DNA"/>
</dbReference>
<dbReference type="PIR" id="A70909">
    <property type="entry name" value="A70909"/>
</dbReference>
<dbReference type="RefSeq" id="NP_215112.1">
    <property type="nucleotide sequence ID" value="NC_000962.3"/>
</dbReference>
<dbReference type="RefSeq" id="WP_003403137.1">
    <property type="nucleotide sequence ID" value="NZ_NVQJ01000033.1"/>
</dbReference>
<dbReference type="SMR" id="P9WF83"/>
<dbReference type="STRING" id="83332.Rv0598c"/>
<dbReference type="PaxDb" id="83332-Rv0598c"/>
<dbReference type="DNASU" id="887861"/>
<dbReference type="GeneID" id="887861"/>
<dbReference type="KEGG" id="mtu:Rv0598c"/>
<dbReference type="KEGG" id="mtv:RVBD_0598c"/>
<dbReference type="TubercuList" id="Rv0598c"/>
<dbReference type="eggNOG" id="COG1848">
    <property type="taxonomic scope" value="Bacteria"/>
</dbReference>
<dbReference type="InParanoid" id="P9WF83"/>
<dbReference type="OrthoDB" id="25693at2"/>
<dbReference type="PhylomeDB" id="P9WF83"/>
<dbReference type="Proteomes" id="UP000001584">
    <property type="component" value="Chromosome"/>
</dbReference>
<dbReference type="GO" id="GO:0005576">
    <property type="term" value="C:extracellular region"/>
    <property type="evidence" value="ECO:0007669"/>
    <property type="project" value="UniProtKB-SubCell"/>
</dbReference>
<dbReference type="GO" id="GO:0000287">
    <property type="term" value="F:magnesium ion binding"/>
    <property type="evidence" value="ECO:0007669"/>
    <property type="project" value="UniProtKB-UniRule"/>
</dbReference>
<dbReference type="GO" id="GO:0004540">
    <property type="term" value="F:RNA nuclease activity"/>
    <property type="evidence" value="ECO:0007669"/>
    <property type="project" value="InterPro"/>
</dbReference>
<dbReference type="CDD" id="cd18681">
    <property type="entry name" value="PIN_MtVapC27-VapC40_like"/>
    <property type="match status" value="1"/>
</dbReference>
<dbReference type="Gene3D" id="3.40.50.1010">
    <property type="entry name" value="5'-nuclease"/>
    <property type="match status" value="1"/>
</dbReference>
<dbReference type="HAMAP" id="MF_00265">
    <property type="entry name" value="VapC_Nob1"/>
    <property type="match status" value="1"/>
</dbReference>
<dbReference type="InterPro" id="IPR029060">
    <property type="entry name" value="PIN-like_dom_sf"/>
</dbReference>
<dbReference type="InterPro" id="IPR002716">
    <property type="entry name" value="PIN_dom"/>
</dbReference>
<dbReference type="InterPro" id="IPR022907">
    <property type="entry name" value="VapC_family"/>
</dbReference>
<dbReference type="Pfam" id="PF01850">
    <property type="entry name" value="PIN"/>
    <property type="match status" value="1"/>
</dbReference>
<dbReference type="SUPFAM" id="SSF88723">
    <property type="entry name" value="PIN domain-like"/>
    <property type="match status" value="1"/>
</dbReference>
<sequence>MKPPLAVDTSVAIPLLVRTHTAHAAVVAWWAHREAALCGHALAETYSVLTRLPRDLRLAPMDAARLLTERFAAPLLLSSRTTEHLPRVLAQFEITGGAVYDALVALAAAEHRAELATRDARAKDTYEKIGVHVVVAA</sequence>
<feature type="chain" id="PRO_0000407886" description="Ribonuclease VapC27">
    <location>
        <begin position="1"/>
        <end position="137"/>
    </location>
</feature>
<feature type="domain" description="PINc" evidence="2">
    <location>
        <begin position="7"/>
        <end position="125"/>
    </location>
</feature>
<feature type="binding site" evidence="2">
    <location>
        <position position="8"/>
    </location>
    <ligand>
        <name>Mg(2+)</name>
        <dbReference type="ChEBI" id="CHEBI:18420"/>
    </ligand>
</feature>
<feature type="binding site" evidence="2">
    <location>
        <position position="101"/>
    </location>
    <ligand>
        <name>Mg(2+)</name>
        <dbReference type="ChEBI" id="CHEBI:18420"/>
    </ligand>
</feature>
<comment type="function">
    <text evidence="1">Probably the toxic component of a type II toxin-antitoxin (TA) system. An RNase (By similarity). Its cognate antitoxin is VapB27.</text>
</comment>
<comment type="cofactor">
    <cofactor evidence="2">
        <name>Mg(2+)</name>
        <dbReference type="ChEBI" id="CHEBI:18420"/>
    </cofactor>
</comment>
<comment type="subunit">
    <text evidence="3">Interacts with cognate antitoxin VapB27.</text>
</comment>
<comment type="subcellular location">
    <subcellularLocation>
        <location>Secreted</location>
    </subcellularLocation>
    <text evidence="4">Following 6 weeks of nutrient starvation.</text>
</comment>
<comment type="similarity">
    <text evidence="2">Belongs to the PINc/VapC protein family.</text>
</comment>
<comment type="caution">
    <text evidence="5">Bioinformatics programs predicts this could have a signal sequence.</text>
</comment>
<gene>
    <name evidence="2" type="primary">vapC27</name>
    <name type="synonym">vapC-mt24</name>
    <name type="ordered locus">Rv0598c</name>
</gene>